<organism>
    <name type="scientific">Lactobacillus delbrueckii subsp. bulgaricus (strain ATCC BAA-365 / Lb-18)</name>
    <dbReference type="NCBI Taxonomy" id="321956"/>
    <lineage>
        <taxon>Bacteria</taxon>
        <taxon>Bacillati</taxon>
        <taxon>Bacillota</taxon>
        <taxon>Bacilli</taxon>
        <taxon>Lactobacillales</taxon>
        <taxon>Lactobacillaceae</taxon>
        <taxon>Lactobacillus</taxon>
    </lineage>
</organism>
<comment type="function">
    <text evidence="1">Produces ATP from ADP in the presence of a proton gradient across the membrane. The alpha chain is a regulatory subunit.</text>
</comment>
<comment type="catalytic activity">
    <reaction evidence="1">
        <text>ATP + H2O + 4 H(+)(in) = ADP + phosphate + 5 H(+)(out)</text>
        <dbReference type="Rhea" id="RHEA:57720"/>
        <dbReference type="ChEBI" id="CHEBI:15377"/>
        <dbReference type="ChEBI" id="CHEBI:15378"/>
        <dbReference type="ChEBI" id="CHEBI:30616"/>
        <dbReference type="ChEBI" id="CHEBI:43474"/>
        <dbReference type="ChEBI" id="CHEBI:456216"/>
        <dbReference type="EC" id="7.1.2.2"/>
    </reaction>
</comment>
<comment type="subunit">
    <text evidence="1">F-type ATPases have 2 components, CF(1) - the catalytic core - and CF(0) - the membrane proton channel. CF(1) has five subunits: alpha(3), beta(3), gamma(1), delta(1), epsilon(1). CF(0) has three main subunits: a(1), b(2) and c(9-12). The alpha and beta chains form an alternating ring which encloses part of the gamma chain. CF(1) is attached to CF(0) by a central stalk formed by the gamma and epsilon chains, while a peripheral stalk is formed by the delta and b chains.</text>
</comment>
<comment type="subcellular location">
    <subcellularLocation>
        <location evidence="1">Cell membrane</location>
        <topology evidence="1">Peripheral membrane protein</topology>
    </subcellularLocation>
</comment>
<comment type="similarity">
    <text evidence="1">Belongs to the ATPase alpha/beta chains family.</text>
</comment>
<reference key="1">
    <citation type="journal article" date="2006" name="Proc. Natl. Acad. Sci. U.S.A.">
        <title>Comparative genomics of the lactic acid bacteria.</title>
        <authorList>
            <person name="Makarova K.S."/>
            <person name="Slesarev A."/>
            <person name="Wolf Y.I."/>
            <person name="Sorokin A."/>
            <person name="Mirkin B."/>
            <person name="Koonin E.V."/>
            <person name="Pavlov A."/>
            <person name="Pavlova N."/>
            <person name="Karamychev V."/>
            <person name="Polouchine N."/>
            <person name="Shakhova V."/>
            <person name="Grigoriev I."/>
            <person name="Lou Y."/>
            <person name="Rohksar D."/>
            <person name="Lucas S."/>
            <person name="Huang K."/>
            <person name="Goodstein D.M."/>
            <person name="Hawkins T."/>
            <person name="Plengvidhya V."/>
            <person name="Welker D."/>
            <person name="Hughes J."/>
            <person name="Goh Y."/>
            <person name="Benson A."/>
            <person name="Baldwin K."/>
            <person name="Lee J.-H."/>
            <person name="Diaz-Muniz I."/>
            <person name="Dosti B."/>
            <person name="Smeianov V."/>
            <person name="Wechter W."/>
            <person name="Barabote R."/>
            <person name="Lorca G."/>
            <person name="Altermann E."/>
            <person name="Barrangou R."/>
            <person name="Ganesan B."/>
            <person name="Xie Y."/>
            <person name="Rawsthorne H."/>
            <person name="Tamir D."/>
            <person name="Parker C."/>
            <person name="Breidt F."/>
            <person name="Broadbent J.R."/>
            <person name="Hutkins R."/>
            <person name="O'Sullivan D."/>
            <person name="Steele J."/>
            <person name="Unlu G."/>
            <person name="Saier M.H. Jr."/>
            <person name="Klaenhammer T."/>
            <person name="Richardson P."/>
            <person name="Kozyavkin S."/>
            <person name="Weimer B.C."/>
            <person name="Mills D.A."/>
        </authorList>
    </citation>
    <scope>NUCLEOTIDE SEQUENCE [LARGE SCALE GENOMIC DNA]</scope>
    <source>
        <strain>ATCC BAA-365 / Lb-18</strain>
    </source>
</reference>
<proteinExistence type="inferred from homology"/>
<dbReference type="EC" id="7.1.2.2" evidence="1"/>
<dbReference type="EMBL" id="CP000412">
    <property type="protein sequence ID" value="ABJ58267.1"/>
    <property type="molecule type" value="Genomic_DNA"/>
</dbReference>
<dbReference type="RefSeq" id="WP_011678120.1">
    <property type="nucleotide sequence ID" value="NC_008529.1"/>
</dbReference>
<dbReference type="SMR" id="Q04BA5"/>
<dbReference type="KEGG" id="lbu:LBUL_0641"/>
<dbReference type="HOGENOM" id="CLU_010091_2_1_9"/>
<dbReference type="BioCyc" id="LDEL321956:LBUL_RS03050-MONOMER"/>
<dbReference type="GO" id="GO:0005886">
    <property type="term" value="C:plasma membrane"/>
    <property type="evidence" value="ECO:0007669"/>
    <property type="project" value="UniProtKB-SubCell"/>
</dbReference>
<dbReference type="GO" id="GO:0045259">
    <property type="term" value="C:proton-transporting ATP synthase complex"/>
    <property type="evidence" value="ECO:0007669"/>
    <property type="project" value="UniProtKB-KW"/>
</dbReference>
<dbReference type="GO" id="GO:0043531">
    <property type="term" value="F:ADP binding"/>
    <property type="evidence" value="ECO:0007669"/>
    <property type="project" value="TreeGrafter"/>
</dbReference>
<dbReference type="GO" id="GO:0005524">
    <property type="term" value="F:ATP binding"/>
    <property type="evidence" value="ECO:0007669"/>
    <property type="project" value="UniProtKB-UniRule"/>
</dbReference>
<dbReference type="GO" id="GO:0046933">
    <property type="term" value="F:proton-transporting ATP synthase activity, rotational mechanism"/>
    <property type="evidence" value="ECO:0007669"/>
    <property type="project" value="UniProtKB-UniRule"/>
</dbReference>
<dbReference type="CDD" id="cd18113">
    <property type="entry name" value="ATP-synt_F1_alpha_C"/>
    <property type="match status" value="1"/>
</dbReference>
<dbReference type="CDD" id="cd18116">
    <property type="entry name" value="ATP-synt_F1_alpha_N"/>
    <property type="match status" value="1"/>
</dbReference>
<dbReference type="CDD" id="cd01132">
    <property type="entry name" value="F1-ATPase_alpha_CD"/>
    <property type="match status" value="1"/>
</dbReference>
<dbReference type="FunFam" id="1.20.150.20:FF:000001">
    <property type="entry name" value="ATP synthase subunit alpha"/>
    <property type="match status" value="1"/>
</dbReference>
<dbReference type="FunFam" id="2.40.30.20:FF:000001">
    <property type="entry name" value="ATP synthase subunit alpha"/>
    <property type="match status" value="1"/>
</dbReference>
<dbReference type="FunFam" id="3.40.50.300:FF:000002">
    <property type="entry name" value="ATP synthase subunit alpha"/>
    <property type="match status" value="1"/>
</dbReference>
<dbReference type="Gene3D" id="2.40.30.20">
    <property type="match status" value="1"/>
</dbReference>
<dbReference type="Gene3D" id="1.20.150.20">
    <property type="entry name" value="ATP synthase alpha/beta chain, C-terminal domain"/>
    <property type="match status" value="1"/>
</dbReference>
<dbReference type="Gene3D" id="3.40.50.300">
    <property type="entry name" value="P-loop containing nucleotide triphosphate hydrolases"/>
    <property type="match status" value="1"/>
</dbReference>
<dbReference type="HAMAP" id="MF_01346">
    <property type="entry name" value="ATP_synth_alpha_bact"/>
    <property type="match status" value="1"/>
</dbReference>
<dbReference type="InterPro" id="IPR023366">
    <property type="entry name" value="ATP_synth_asu-like_sf"/>
</dbReference>
<dbReference type="InterPro" id="IPR000793">
    <property type="entry name" value="ATP_synth_asu_C"/>
</dbReference>
<dbReference type="InterPro" id="IPR038376">
    <property type="entry name" value="ATP_synth_asu_C_sf"/>
</dbReference>
<dbReference type="InterPro" id="IPR033732">
    <property type="entry name" value="ATP_synth_F1_a_nt-bd_dom"/>
</dbReference>
<dbReference type="InterPro" id="IPR005294">
    <property type="entry name" value="ATP_synth_F1_asu"/>
</dbReference>
<dbReference type="InterPro" id="IPR020003">
    <property type="entry name" value="ATPase_a/bsu_AS"/>
</dbReference>
<dbReference type="InterPro" id="IPR004100">
    <property type="entry name" value="ATPase_F1/V1/A1_a/bsu_N"/>
</dbReference>
<dbReference type="InterPro" id="IPR036121">
    <property type="entry name" value="ATPase_F1/V1/A1_a/bsu_N_sf"/>
</dbReference>
<dbReference type="InterPro" id="IPR000194">
    <property type="entry name" value="ATPase_F1/V1/A1_a/bsu_nucl-bd"/>
</dbReference>
<dbReference type="InterPro" id="IPR027417">
    <property type="entry name" value="P-loop_NTPase"/>
</dbReference>
<dbReference type="NCBIfam" id="TIGR00962">
    <property type="entry name" value="atpA"/>
    <property type="match status" value="1"/>
</dbReference>
<dbReference type="NCBIfam" id="NF009884">
    <property type="entry name" value="PRK13343.1"/>
    <property type="match status" value="1"/>
</dbReference>
<dbReference type="PANTHER" id="PTHR48082">
    <property type="entry name" value="ATP SYNTHASE SUBUNIT ALPHA, MITOCHONDRIAL"/>
    <property type="match status" value="1"/>
</dbReference>
<dbReference type="PANTHER" id="PTHR48082:SF2">
    <property type="entry name" value="ATP SYNTHASE SUBUNIT ALPHA, MITOCHONDRIAL"/>
    <property type="match status" value="1"/>
</dbReference>
<dbReference type="Pfam" id="PF00006">
    <property type="entry name" value="ATP-synt_ab"/>
    <property type="match status" value="1"/>
</dbReference>
<dbReference type="Pfam" id="PF00306">
    <property type="entry name" value="ATP-synt_ab_C"/>
    <property type="match status" value="1"/>
</dbReference>
<dbReference type="Pfam" id="PF02874">
    <property type="entry name" value="ATP-synt_ab_N"/>
    <property type="match status" value="1"/>
</dbReference>
<dbReference type="PIRSF" id="PIRSF039088">
    <property type="entry name" value="F_ATPase_subunit_alpha"/>
    <property type="match status" value="1"/>
</dbReference>
<dbReference type="SUPFAM" id="SSF47917">
    <property type="entry name" value="C-terminal domain of alpha and beta subunits of F1 ATP synthase"/>
    <property type="match status" value="1"/>
</dbReference>
<dbReference type="SUPFAM" id="SSF50615">
    <property type="entry name" value="N-terminal domain of alpha and beta subunits of F1 ATP synthase"/>
    <property type="match status" value="1"/>
</dbReference>
<dbReference type="SUPFAM" id="SSF52540">
    <property type="entry name" value="P-loop containing nucleoside triphosphate hydrolases"/>
    <property type="match status" value="1"/>
</dbReference>
<dbReference type="PROSITE" id="PS00152">
    <property type="entry name" value="ATPASE_ALPHA_BETA"/>
    <property type="match status" value="1"/>
</dbReference>
<feature type="chain" id="PRO_0000302660" description="ATP synthase subunit alpha">
    <location>
        <begin position="1"/>
        <end position="503"/>
    </location>
</feature>
<feature type="binding site" evidence="1">
    <location>
        <begin position="169"/>
        <end position="176"/>
    </location>
    <ligand>
        <name>ATP</name>
        <dbReference type="ChEBI" id="CHEBI:30616"/>
    </ligand>
</feature>
<feature type="site" description="Required for activity" evidence="1">
    <location>
        <position position="362"/>
    </location>
</feature>
<keyword id="KW-0066">ATP synthesis</keyword>
<keyword id="KW-0067">ATP-binding</keyword>
<keyword id="KW-1003">Cell membrane</keyword>
<keyword id="KW-0139">CF(1)</keyword>
<keyword id="KW-0375">Hydrogen ion transport</keyword>
<keyword id="KW-0406">Ion transport</keyword>
<keyword id="KW-0472">Membrane</keyword>
<keyword id="KW-0547">Nucleotide-binding</keyword>
<keyword id="KW-1278">Translocase</keyword>
<keyword id="KW-0813">Transport</keyword>
<evidence type="ECO:0000255" key="1">
    <source>
        <dbReference type="HAMAP-Rule" id="MF_01346"/>
    </source>
</evidence>
<sequence>MSIKAEEISSLIKQQLEHYDDKLDIEEVGVVTYVGDGIARAHGLNNVLSSELLQFDNGAYGIAQNLESNDVGIIILGKFDDIREGDRVKRTGRIMEVPVGDALIGRVVNPLGQPVDGLGEIKTDKTRPIESKAPGVMQRQSVNQPLQTGIKAIDALVPIGRGQRELVIGDRKTGKTSLAIDTILNQKGQDVICIYVSIGQKESTVRAQVETLKKLGAMDYTIVVEAGPSEPAPMLYIAPYSGIAMGEEFMYAGKDVLVVFDDLSKQAVAYRELSLLLRRPPGREAYPGDVFYLHSRLLERSAKLSKELGGGSLTALPVIQTEAGDISAYIPTNVISITDGQIFLQSDMFFSGTRPAIDAGASVSRVGGAAQIPAMKKVAGTLRTDLASYRELESFAQFGSDLDQATQAKLARGRRTVEVLKQPLHKPVAVEKQVVLLYALTHGFMDAVSVDDIARFEQELYTDFDANHADLLAEIKSTGKLPDENKLQEALQQFASSFSSSNK</sequence>
<accession>Q04BA5</accession>
<name>ATPA_LACDB</name>
<protein>
    <recommendedName>
        <fullName evidence="1">ATP synthase subunit alpha</fullName>
        <ecNumber evidence="1">7.1.2.2</ecNumber>
    </recommendedName>
    <alternativeName>
        <fullName evidence="1">ATP synthase F1 sector subunit alpha</fullName>
    </alternativeName>
    <alternativeName>
        <fullName evidence="1">F-ATPase subunit alpha</fullName>
    </alternativeName>
</protein>
<gene>
    <name evidence="1" type="primary">atpA</name>
    <name type="ordered locus">LBUL_0641</name>
</gene>